<dbReference type="EC" id="3.6.1.23" evidence="1"/>
<dbReference type="EMBL" id="CP000555">
    <property type="protein sequence ID" value="ABM95523.1"/>
    <property type="molecule type" value="Genomic_DNA"/>
</dbReference>
<dbReference type="RefSeq" id="WP_011830155.1">
    <property type="nucleotide sequence ID" value="NC_008825.1"/>
</dbReference>
<dbReference type="SMR" id="A2SIY4"/>
<dbReference type="STRING" id="420662.Mpe_A2570"/>
<dbReference type="KEGG" id="mpt:Mpe_A2570"/>
<dbReference type="eggNOG" id="COG0756">
    <property type="taxonomic scope" value="Bacteria"/>
</dbReference>
<dbReference type="HOGENOM" id="CLU_068508_1_1_4"/>
<dbReference type="UniPathway" id="UPA00610">
    <property type="reaction ID" value="UER00666"/>
</dbReference>
<dbReference type="Proteomes" id="UP000000366">
    <property type="component" value="Chromosome"/>
</dbReference>
<dbReference type="GO" id="GO:0004170">
    <property type="term" value="F:dUTP diphosphatase activity"/>
    <property type="evidence" value="ECO:0007669"/>
    <property type="project" value="UniProtKB-UniRule"/>
</dbReference>
<dbReference type="GO" id="GO:0000287">
    <property type="term" value="F:magnesium ion binding"/>
    <property type="evidence" value="ECO:0007669"/>
    <property type="project" value="UniProtKB-UniRule"/>
</dbReference>
<dbReference type="GO" id="GO:0006226">
    <property type="term" value="P:dUMP biosynthetic process"/>
    <property type="evidence" value="ECO:0007669"/>
    <property type="project" value="UniProtKB-UniRule"/>
</dbReference>
<dbReference type="GO" id="GO:0046081">
    <property type="term" value="P:dUTP catabolic process"/>
    <property type="evidence" value="ECO:0007669"/>
    <property type="project" value="InterPro"/>
</dbReference>
<dbReference type="CDD" id="cd07557">
    <property type="entry name" value="trimeric_dUTPase"/>
    <property type="match status" value="1"/>
</dbReference>
<dbReference type="FunFam" id="2.70.40.10:FF:000002">
    <property type="entry name" value="dUTP diphosphatase"/>
    <property type="match status" value="1"/>
</dbReference>
<dbReference type="Gene3D" id="2.70.40.10">
    <property type="match status" value="1"/>
</dbReference>
<dbReference type="HAMAP" id="MF_00116">
    <property type="entry name" value="dUTPase_bact"/>
    <property type="match status" value="1"/>
</dbReference>
<dbReference type="InterPro" id="IPR008181">
    <property type="entry name" value="dUTPase"/>
</dbReference>
<dbReference type="InterPro" id="IPR029054">
    <property type="entry name" value="dUTPase-like"/>
</dbReference>
<dbReference type="InterPro" id="IPR036157">
    <property type="entry name" value="dUTPase-like_sf"/>
</dbReference>
<dbReference type="InterPro" id="IPR033704">
    <property type="entry name" value="dUTPase_trimeric"/>
</dbReference>
<dbReference type="NCBIfam" id="TIGR00576">
    <property type="entry name" value="dut"/>
    <property type="match status" value="1"/>
</dbReference>
<dbReference type="NCBIfam" id="NF001862">
    <property type="entry name" value="PRK00601.1"/>
    <property type="match status" value="1"/>
</dbReference>
<dbReference type="PANTHER" id="PTHR11241">
    <property type="entry name" value="DEOXYURIDINE 5'-TRIPHOSPHATE NUCLEOTIDOHYDROLASE"/>
    <property type="match status" value="1"/>
</dbReference>
<dbReference type="PANTHER" id="PTHR11241:SF0">
    <property type="entry name" value="DEOXYURIDINE 5'-TRIPHOSPHATE NUCLEOTIDOHYDROLASE"/>
    <property type="match status" value="1"/>
</dbReference>
<dbReference type="Pfam" id="PF00692">
    <property type="entry name" value="dUTPase"/>
    <property type="match status" value="1"/>
</dbReference>
<dbReference type="SUPFAM" id="SSF51283">
    <property type="entry name" value="dUTPase-like"/>
    <property type="match status" value="1"/>
</dbReference>
<evidence type="ECO:0000255" key="1">
    <source>
        <dbReference type="HAMAP-Rule" id="MF_00116"/>
    </source>
</evidence>
<comment type="function">
    <text evidence="1">This enzyme is involved in nucleotide metabolism: it produces dUMP, the immediate precursor of thymidine nucleotides and it decreases the intracellular concentration of dUTP so that uracil cannot be incorporated into DNA.</text>
</comment>
<comment type="catalytic activity">
    <reaction evidence="1">
        <text>dUTP + H2O = dUMP + diphosphate + H(+)</text>
        <dbReference type="Rhea" id="RHEA:10248"/>
        <dbReference type="ChEBI" id="CHEBI:15377"/>
        <dbReference type="ChEBI" id="CHEBI:15378"/>
        <dbReference type="ChEBI" id="CHEBI:33019"/>
        <dbReference type="ChEBI" id="CHEBI:61555"/>
        <dbReference type="ChEBI" id="CHEBI:246422"/>
        <dbReference type="EC" id="3.6.1.23"/>
    </reaction>
</comment>
<comment type="cofactor">
    <cofactor evidence="1">
        <name>Mg(2+)</name>
        <dbReference type="ChEBI" id="CHEBI:18420"/>
    </cofactor>
</comment>
<comment type="pathway">
    <text evidence="1">Pyrimidine metabolism; dUMP biosynthesis; dUMP from dCTP (dUTP route): step 2/2.</text>
</comment>
<comment type="similarity">
    <text evidence="1">Belongs to the dUTPase family.</text>
</comment>
<name>DUT_METPP</name>
<organism>
    <name type="scientific">Methylibium petroleiphilum (strain ATCC BAA-1232 / LMG 22953 / PM1)</name>
    <dbReference type="NCBI Taxonomy" id="420662"/>
    <lineage>
        <taxon>Bacteria</taxon>
        <taxon>Pseudomonadati</taxon>
        <taxon>Pseudomonadota</taxon>
        <taxon>Betaproteobacteria</taxon>
        <taxon>Burkholderiales</taxon>
        <taxon>Sphaerotilaceae</taxon>
        <taxon>Methylibium</taxon>
    </lineage>
</organism>
<sequence>MTTIDVKVLDPRMADQLPAYATPGSAGLDLRACLDAPLLLEPGQTQLIPTGLSIHIGDPGLAAVILPRSGLGHKHGIVLGNLVGLIDSDYQGPLMVSCWNRGLAAFTVQPLERIAQLVIVPVVQASFRVVDDFGASERGEGGFGSTGQR</sequence>
<protein>
    <recommendedName>
        <fullName evidence="1">Deoxyuridine 5'-triphosphate nucleotidohydrolase</fullName>
        <shortName evidence="1">dUTPase</shortName>
        <ecNumber evidence="1">3.6.1.23</ecNumber>
    </recommendedName>
    <alternativeName>
        <fullName evidence="1">dUTP pyrophosphatase</fullName>
    </alternativeName>
</protein>
<proteinExistence type="inferred from homology"/>
<accession>A2SIY4</accession>
<keyword id="KW-0378">Hydrolase</keyword>
<keyword id="KW-0460">Magnesium</keyword>
<keyword id="KW-0479">Metal-binding</keyword>
<keyword id="KW-0546">Nucleotide metabolism</keyword>
<keyword id="KW-1185">Reference proteome</keyword>
<reference key="1">
    <citation type="journal article" date="2007" name="J. Bacteriol.">
        <title>Whole-genome analysis of the methyl tert-butyl ether-degrading beta-proteobacterium Methylibium petroleiphilum PM1.</title>
        <authorList>
            <person name="Kane S.R."/>
            <person name="Chakicherla A.Y."/>
            <person name="Chain P.S.G."/>
            <person name="Schmidt R."/>
            <person name="Shin M.W."/>
            <person name="Legler T.C."/>
            <person name="Scow K.M."/>
            <person name="Larimer F.W."/>
            <person name="Lucas S.M."/>
            <person name="Richardson P.M."/>
            <person name="Hristova K.R."/>
        </authorList>
    </citation>
    <scope>NUCLEOTIDE SEQUENCE [LARGE SCALE GENOMIC DNA]</scope>
    <source>
        <strain>ATCC BAA-1232 / LMG 22953 / PM1</strain>
    </source>
</reference>
<feature type="chain" id="PRO_1000015482" description="Deoxyuridine 5'-triphosphate nucleotidohydrolase">
    <location>
        <begin position="1"/>
        <end position="149"/>
    </location>
</feature>
<feature type="binding site" evidence="1">
    <location>
        <begin position="68"/>
        <end position="70"/>
    </location>
    <ligand>
        <name>substrate</name>
    </ligand>
</feature>
<feature type="binding site" evidence="1">
    <location>
        <position position="81"/>
    </location>
    <ligand>
        <name>substrate</name>
    </ligand>
</feature>
<feature type="binding site" evidence="1">
    <location>
        <begin position="85"/>
        <end position="87"/>
    </location>
    <ligand>
        <name>substrate</name>
    </ligand>
</feature>
<feature type="binding site" evidence="1">
    <location>
        <position position="95"/>
    </location>
    <ligand>
        <name>substrate</name>
    </ligand>
</feature>
<gene>
    <name evidence="1" type="primary">dut</name>
    <name type="ordered locus">Mpe_A2570</name>
</gene>